<gene>
    <name type="primary">alr</name>
    <name type="ordered locus">Sputcn32_0759</name>
</gene>
<organism>
    <name type="scientific">Shewanella putrefaciens (strain CN-32 / ATCC BAA-453)</name>
    <dbReference type="NCBI Taxonomy" id="319224"/>
    <lineage>
        <taxon>Bacteria</taxon>
        <taxon>Pseudomonadati</taxon>
        <taxon>Pseudomonadota</taxon>
        <taxon>Gammaproteobacteria</taxon>
        <taxon>Alteromonadales</taxon>
        <taxon>Shewanellaceae</taxon>
        <taxon>Shewanella</taxon>
    </lineage>
</organism>
<accession>A4Y3F6</accession>
<reference key="1">
    <citation type="submission" date="2007-04" db="EMBL/GenBank/DDBJ databases">
        <title>Complete sequence of Shewanella putrefaciens CN-32.</title>
        <authorList>
            <consortium name="US DOE Joint Genome Institute"/>
            <person name="Copeland A."/>
            <person name="Lucas S."/>
            <person name="Lapidus A."/>
            <person name="Barry K."/>
            <person name="Detter J.C."/>
            <person name="Glavina del Rio T."/>
            <person name="Hammon N."/>
            <person name="Israni S."/>
            <person name="Dalin E."/>
            <person name="Tice H."/>
            <person name="Pitluck S."/>
            <person name="Chain P."/>
            <person name="Malfatti S."/>
            <person name="Shin M."/>
            <person name="Vergez L."/>
            <person name="Schmutz J."/>
            <person name="Larimer F."/>
            <person name="Land M."/>
            <person name="Hauser L."/>
            <person name="Kyrpides N."/>
            <person name="Mikhailova N."/>
            <person name="Romine M.F."/>
            <person name="Fredrickson J."/>
            <person name="Tiedje J."/>
            <person name="Richardson P."/>
        </authorList>
    </citation>
    <scope>NUCLEOTIDE SEQUENCE [LARGE SCALE GENOMIC DNA]</scope>
    <source>
        <strain>CN-32 / ATCC BAA-453</strain>
    </source>
</reference>
<evidence type="ECO:0000255" key="1">
    <source>
        <dbReference type="HAMAP-Rule" id="MF_01201"/>
    </source>
</evidence>
<protein>
    <recommendedName>
        <fullName evidence="1">Alanine racemase</fullName>
        <ecNumber evidence="1">5.1.1.1</ecNumber>
    </recommendedName>
</protein>
<feature type="chain" id="PRO_1000164618" description="Alanine racemase">
    <location>
        <begin position="1"/>
        <end position="358"/>
    </location>
</feature>
<feature type="active site" description="Proton acceptor; specific for D-alanine" evidence="1">
    <location>
        <position position="35"/>
    </location>
</feature>
<feature type="active site" description="Proton acceptor; specific for L-alanine" evidence="1">
    <location>
        <position position="255"/>
    </location>
</feature>
<feature type="binding site" evidence="1">
    <location>
        <position position="130"/>
    </location>
    <ligand>
        <name>substrate</name>
    </ligand>
</feature>
<feature type="binding site" evidence="1">
    <location>
        <position position="303"/>
    </location>
    <ligand>
        <name>substrate</name>
    </ligand>
</feature>
<feature type="modified residue" description="N6-(pyridoxal phosphate)lysine" evidence="1">
    <location>
        <position position="35"/>
    </location>
</feature>
<dbReference type="EC" id="5.1.1.1" evidence="1"/>
<dbReference type="EMBL" id="CP000681">
    <property type="protein sequence ID" value="ABP74489.1"/>
    <property type="molecule type" value="Genomic_DNA"/>
</dbReference>
<dbReference type="SMR" id="A4Y3F6"/>
<dbReference type="STRING" id="319224.Sputcn32_0759"/>
<dbReference type="KEGG" id="spc:Sputcn32_0759"/>
<dbReference type="eggNOG" id="COG0787">
    <property type="taxonomic scope" value="Bacteria"/>
</dbReference>
<dbReference type="HOGENOM" id="CLU_028393_1_0_6"/>
<dbReference type="UniPathway" id="UPA00042">
    <property type="reaction ID" value="UER00497"/>
</dbReference>
<dbReference type="GO" id="GO:0005829">
    <property type="term" value="C:cytosol"/>
    <property type="evidence" value="ECO:0007669"/>
    <property type="project" value="TreeGrafter"/>
</dbReference>
<dbReference type="GO" id="GO:0008784">
    <property type="term" value="F:alanine racemase activity"/>
    <property type="evidence" value="ECO:0007669"/>
    <property type="project" value="UniProtKB-UniRule"/>
</dbReference>
<dbReference type="GO" id="GO:0030170">
    <property type="term" value="F:pyridoxal phosphate binding"/>
    <property type="evidence" value="ECO:0007669"/>
    <property type="project" value="UniProtKB-UniRule"/>
</dbReference>
<dbReference type="GO" id="GO:0030632">
    <property type="term" value="P:D-alanine biosynthetic process"/>
    <property type="evidence" value="ECO:0007669"/>
    <property type="project" value="UniProtKB-UniRule"/>
</dbReference>
<dbReference type="CDD" id="cd06827">
    <property type="entry name" value="PLPDE_III_AR_proteobact"/>
    <property type="match status" value="1"/>
</dbReference>
<dbReference type="FunFam" id="2.40.37.10:FF:000002">
    <property type="entry name" value="Alanine racemase"/>
    <property type="match status" value="1"/>
</dbReference>
<dbReference type="FunFam" id="3.20.20.10:FF:000002">
    <property type="entry name" value="Alanine racemase"/>
    <property type="match status" value="1"/>
</dbReference>
<dbReference type="Gene3D" id="3.20.20.10">
    <property type="entry name" value="Alanine racemase"/>
    <property type="match status" value="1"/>
</dbReference>
<dbReference type="Gene3D" id="2.40.37.10">
    <property type="entry name" value="Lyase, Ornithine Decarboxylase, Chain A, domain 1"/>
    <property type="match status" value="1"/>
</dbReference>
<dbReference type="HAMAP" id="MF_01201">
    <property type="entry name" value="Ala_racemase"/>
    <property type="match status" value="1"/>
</dbReference>
<dbReference type="InterPro" id="IPR000821">
    <property type="entry name" value="Ala_racemase"/>
</dbReference>
<dbReference type="InterPro" id="IPR009006">
    <property type="entry name" value="Ala_racemase/Decarboxylase_C"/>
</dbReference>
<dbReference type="InterPro" id="IPR011079">
    <property type="entry name" value="Ala_racemase_C"/>
</dbReference>
<dbReference type="InterPro" id="IPR001608">
    <property type="entry name" value="Ala_racemase_N"/>
</dbReference>
<dbReference type="InterPro" id="IPR020622">
    <property type="entry name" value="Ala_racemase_pyridoxalP-BS"/>
</dbReference>
<dbReference type="InterPro" id="IPR029066">
    <property type="entry name" value="PLP-binding_barrel"/>
</dbReference>
<dbReference type="NCBIfam" id="TIGR00492">
    <property type="entry name" value="alr"/>
    <property type="match status" value="1"/>
</dbReference>
<dbReference type="PANTHER" id="PTHR30511">
    <property type="entry name" value="ALANINE RACEMASE"/>
    <property type="match status" value="1"/>
</dbReference>
<dbReference type="PANTHER" id="PTHR30511:SF4">
    <property type="entry name" value="ALANINE RACEMASE, BIOSYNTHETIC"/>
    <property type="match status" value="1"/>
</dbReference>
<dbReference type="Pfam" id="PF00842">
    <property type="entry name" value="Ala_racemase_C"/>
    <property type="match status" value="1"/>
</dbReference>
<dbReference type="Pfam" id="PF01168">
    <property type="entry name" value="Ala_racemase_N"/>
    <property type="match status" value="1"/>
</dbReference>
<dbReference type="PRINTS" id="PR00992">
    <property type="entry name" value="ALARACEMASE"/>
</dbReference>
<dbReference type="SMART" id="SM01005">
    <property type="entry name" value="Ala_racemase_C"/>
    <property type="match status" value="1"/>
</dbReference>
<dbReference type="SUPFAM" id="SSF50621">
    <property type="entry name" value="Alanine racemase C-terminal domain-like"/>
    <property type="match status" value="1"/>
</dbReference>
<dbReference type="SUPFAM" id="SSF51419">
    <property type="entry name" value="PLP-binding barrel"/>
    <property type="match status" value="1"/>
</dbReference>
<dbReference type="PROSITE" id="PS00395">
    <property type="entry name" value="ALANINE_RACEMASE"/>
    <property type="match status" value="1"/>
</dbReference>
<comment type="function">
    <text evidence="1">Catalyzes the interconversion of L-alanine and D-alanine. May also act on other amino acids.</text>
</comment>
<comment type="catalytic activity">
    <reaction evidence="1">
        <text>L-alanine = D-alanine</text>
        <dbReference type="Rhea" id="RHEA:20249"/>
        <dbReference type="ChEBI" id="CHEBI:57416"/>
        <dbReference type="ChEBI" id="CHEBI:57972"/>
        <dbReference type="EC" id="5.1.1.1"/>
    </reaction>
</comment>
<comment type="cofactor">
    <cofactor evidence="1">
        <name>pyridoxal 5'-phosphate</name>
        <dbReference type="ChEBI" id="CHEBI:597326"/>
    </cofactor>
</comment>
<comment type="pathway">
    <text evidence="1">Amino-acid biosynthesis; D-alanine biosynthesis; D-alanine from L-alanine: step 1/1.</text>
</comment>
<comment type="similarity">
    <text evidence="1">Belongs to the alanine racemase family.</text>
</comment>
<keyword id="KW-0413">Isomerase</keyword>
<keyword id="KW-0663">Pyridoxal phosphate</keyword>
<name>ALR_SHEPC</name>
<sequence length="358" mass="38756">MKPFPRAEISSSALQNNLAVLRQQASASQVMAVVKANGYGHGLLNVANCLVNADGFGLARLEEALELRAGGVKARLLLLEGFFRSTDLPLLVAHDIDTVVHHESQIEMLEQVKLTKPVTVWLKVDSGMHRLGVTPEQFATVYARLMACPNIAKPIHLMTHFACADEPDNHYTDVQMAAFNELTAGLPGFRTLANSAGALYWPKSQGDWIRPGIALYGVSPVAGDCGTNHGLIPAMNLVSRLIAVRDHKANQPVGYGCYWTAKQDTRLGVVAIGYGDGYPRNAPEGTPVWVNGRRVPIVGRVSMDMLTVDLGQDATDKVGDDVLLWGQDLPVEEVAERIGTIAYELVTKLTPRVAVCLA</sequence>
<proteinExistence type="inferred from homology"/>